<name>RL33_METI4</name>
<gene>
    <name evidence="1" type="primary">rpmG</name>
    <name type="ordered locus">Minf_0788</name>
</gene>
<reference key="1">
    <citation type="journal article" date="2008" name="Biol. Direct">
        <title>Complete genome sequence of the extremely acidophilic methanotroph isolate V4, Methylacidiphilum infernorum, a representative of the bacterial phylum Verrucomicrobia.</title>
        <authorList>
            <person name="Hou S."/>
            <person name="Makarova K.S."/>
            <person name="Saw J.H."/>
            <person name="Senin P."/>
            <person name="Ly B.V."/>
            <person name="Zhou Z."/>
            <person name="Ren Y."/>
            <person name="Wang J."/>
            <person name="Galperin M.Y."/>
            <person name="Omelchenko M.V."/>
            <person name="Wolf Y.I."/>
            <person name="Yutin N."/>
            <person name="Koonin E.V."/>
            <person name="Stott M.B."/>
            <person name="Mountain B.W."/>
            <person name="Crowe M.A."/>
            <person name="Smirnova A.V."/>
            <person name="Dunfield P.F."/>
            <person name="Feng L."/>
            <person name="Wang L."/>
            <person name="Alam M."/>
        </authorList>
    </citation>
    <scope>NUCLEOTIDE SEQUENCE [LARGE SCALE GENOMIC DNA]</scope>
    <source>
        <strain>Isolate V4</strain>
    </source>
</reference>
<comment type="similarity">
    <text evidence="1">Belongs to the bacterial ribosomal protein bL33 family.</text>
</comment>
<proteinExistence type="inferred from homology"/>
<feature type="chain" id="PRO_0000356539" description="Large ribosomal subunit protein bL33">
    <location>
        <begin position="1"/>
        <end position="55"/>
    </location>
</feature>
<keyword id="KW-0687">Ribonucleoprotein</keyword>
<keyword id="KW-0689">Ribosomal protein</keyword>
<sequence>MPREQIILECTEAKALGKPASRYYGTKNKKQQQGKIELRKYNPFLRRHTLHREIK</sequence>
<evidence type="ECO:0000255" key="1">
    <source>
        <dbReference type="HAMAP-Rule" id="MF_00294"/>
    </source>
</evidence>
<evidence type="ECO:0000305" key="2"/>
<protein>
    <recommendedName>
        <fullName evidence="1">Large ribosomal subunit protein bL33</fullName>
    </recommendedName>
    <alternativeName>
        <fullName evidence="2">50S ribosomal protein L33</fullName>
    </alternativeName>
</protein>
<organism>
    <name type="scientific">Methylacidiphilum infernorum (isolate V4)</name>
    <name type="common">Methylokorus infernorum (strain V4)</name>
    <dbReference type="NCBI Taxonomy" id="481448"/>
    <lineage>
        <taxon>Bacteria</taxon>
        <taxon>Pseudomonadati</taxon>
        <taxon>Verrucomicrobiota</taxon>
        <taxon>Methylacidiphilae</taxon>
        <taxon>Methylacidiphilales</taxon>
        <taxon>Methylacidiphilaceae</taxon>
        <taxon>Methylacidiphilum (ex Ratnadevi et al. 2023)</taxon>
    </lineage>
</organism>
<dbReference type="EMBL" id="CP000975">
    <property type="protein sequence ID" value="ACD82843.1"/>
    <property type="molecule type" value="Genomic_DNA"/>
</dbReference>
<dbReference type="RefSeq" id="WP_012463125.1">
    <property type="nucleotide sequence ID" value="NC_010794.1"/>
</dbReference>
<dbReference type="SMR" id="B3E147"/>
<dbReference type="STRING" id="481448.Minf_0788"/>
<dbReference type="KEGG" id="min:Minf_0788"/>
<dbReference type="eggNOG" id="COG0267">
    <property type="taxonomic scope" value="Bacteria"/>
</dbReference>
<dbReference type="HOGENOM" id="CLU_190949_3_0_0"/>
<dbReference type="OrthoDB" id="197660at2"/>
<dbReference type="Proteomes" id="UP000009149">
    <property type="component" value="Chromosome"/>
</dbReference>
<dbReference type="GO" id="GO:0005737">
    <property type="term" value="C:cytoplasm"/>
    <property type="evidence" value="ECO:0007669"/>
    <property type="project" value="UniProtKB-ARBA"/>
</dbReference>
<dbReference type="GO" id="GO:1990904">
    <property type="term" value="C:ribonucleoprotein complex"/>
    <property type="evidence" value="ECO:0007669"/>
    <property type="project" value="UniProtKB-KW"/>
</dbReference>
<dbReference type="GO" id="GO:0005840">
    <property type="term" value="C:ribosome"/>
    <property type="evidence" value="ECO:0007669"/>
    <property type="project" value="UniProtKB-KW"/>
</dbReference>
<dbReference type="GO" id="GO:0003735">
    <property type="term" value="F:structural constituent of ribosome"/>
    <property type="evidence" value="ECO:0007669"/>
    <property type="project" value="InterPro"/>
</dbReference>
<dbReference type="GO" id="GO:0006412">
    <property type="term" value="P:translation"/>
    <property type="evidence" value="ECO:0007669"/>
    <property type="project" value="UniProtKB-UniRule"/>
</dbReference>
<dbReference type="Gene3D" id="2.20.28.120">
    <property type="entry name" value="Ribosomal protein L33"/>
    <property type="match status" value="1"/>
</dbReference>
<dbReference type="HAMAP" id="MF_00294">
    <property type="entry name" value="Ribosomal_bL33"/>
    <property type="match status" value="1"/>
</dbReference>
<dbReference type="InterPro" id="IPR001705">
    <property type="entry name" value="Ribosomal_bL33"/>
</dbReference>
<dbReference type="InterPro" id="IPR038584">
    <property type="entry name" value="Ribosomal_bL33_sf"/>
</dbReference>
<dbReference type="InterPro" id="IPR011332">
    <property type="entry name" value="Ribosomal_zn-bd"/>
</dbReference>
<dbReference type="NCBIfam" id="NF001764">
    <property type="entry name" value="PRK00504.1"/>
    <property type="match status" value="1"/>
</dbReference>
<dbReference type="NCBIfam" id="NF001860">
    <property type="entry name" value="PRK00595.1"/>
    <property type="match status" value="1"/>
</dbReference>
<dbReference type="NCBIfam" id="TIGR01023">
    <property type="entry name" value="rpmG_bact"/>
    <property type="match status" value="1"/>
</dbReference>
<dbReference type="PANTHER" id="PTHR43168">
    <property type="entry name" value="50S RIBOSOMAL PROTEIN L33, CHLOROPLASTIC"/>
    <property type="match status" value="1"/>
</dbReference>
<dbReference type="PANTHER" id="PTHR43168:SF2">
    <property type="entry name" value="LARGE RIBOSOMAL SUBUNIT PROTEIN BL33C"/>
    <property type="match status" value="1"/>
</dbReference>
<dbReference type="Pfam" id="PF00471">
    <property type="entry name" value="Ribosomal_L33"/>
    <property type="match status" value="1"/>
</dbReference>
<dbReference type="SUPFAM" id="SSF57829">
    <property type="entry name" value="Zn-binding ribosomal proteins"/>
    <property type="match status" value="1"/>
</dbReference>
<accession>B3E147</accession>